<sequence>MEKPNNTITDVLEGIVTEILVRLPLRSISRFKSVSQTWKSAIESVYFRRLFVSLHQNTSSSWSLLLRKEEFIDFHGCGTWGLPKSLGSYIQCMELDGKFEYMWFSGSNGLILMHRKLGTWKNYVGNPVLQQWVEIPACPGSYTFFCGVVTGVDEVGVVLSFKVVKSGNMFLNKGEMYMPLYVYSSETGFWIHKEVVCPVRLPNFYDPISLNGTLYFSQRGDSYNRRPGLMVLDFYGKPKDCHFIPLPDHALNRNKTCLATSSGFVMYIKTLAQPGGNLLKVWRLIDDSAWQLMWEVSIPFIGCYAPMSMHPFDRNIVYLWSHDNCYLMSFNLQTQNYKIFGDESKHHDCYINHRTCEKHMYKISRPYSVSEYEGPIILQQWVLSRWMQSVPRPPEVEMIDTTSLLSLVVKNEE</sequence>
<organism>
    <name type="scientific">Arabidopsis thaliana</name>
    <name type="common">Mouse-ear cress</name>
    <dbReference type="NCBI Taxonomy" id="3702"/>
    <lineage>
        <taxon>Eukaryota</taxon>
        <taxon>Viridiplantae</taxon>
        <taxon>Streptophyta</taxon>
        <taxon>Embryophyta</taxon>
        <taxon>Tracheophyta</taxon>
        <taxon>Spermatophyta</taxon>
        <taxon>Magnoliopsida</taxon>
        <taxon>eudicotyledons</taxon>
        <taxon>Gunneridae</taxon>
        <taxon>Pentapetalae</taxon>
        <taxon>rosids</taxon>
        <taxon>malvids</taxon>
        <taxon>Brassicales</taxon>
        <taxon>Brassicaceae</taxon>
        <taxon>Camelineae</taxon>
        <taxon>Arabidopsis</taxon>
    </lineage>
</organism>
<comment type="sequence caution" evidence="1">
    <conflict type="erroneous termination">
        <sequence resource="EMBL-CDS" id="ABK28256"/>
    </conflict>
    <text>Extended C-terminus.</text>
</comment>
<comment type="sequence caution" evidence="1">
    <conflict type="erroneous gene model prediction">
        <sequence resource="EMBL-CDS" id="CAB52817"/>
    </conflict>
</comment>
<comment type="sequence caution" evidence="1">
    <conflict type="erroneous gene model prediction">
        <sequence resource="EMBL-CDS" id="CAB79198"/>
    </conflict>
</comment>
<reference key="1">
    <citation type="journal article" date="1999" name="Nature">
        <title>Sequence and analysis of chromosome 4 of the plant Arabidopsis thaliana.</title>
        <authorList>
            <person name="Mayer K.F.X."/>
            <person name="Schueller C."/>
            <person name="Wambutt R."/>
            <person name="Murphy G."/>
            <person name="Volckaert G."/>
            <person name="Pohl T."/>
            <person name="Duesterhoeft A."/>
            <person name="Stiekema W."/>
            <person name="Entian K.-D."/>
            <person name="Terryn N."/>
            <person name="Harris B."/>
            <person name="Ansorge W."/>
            <person name="Brandt P."/>
            <person name="Grivell L.A."/>
            <person name="Rieger M."/>
            <person name="Weichselgartner M."/>
            <person name="de Simone V."/>
            <person name="Obermaier B."/>
            <person name="Mache R."/>
            <person name="Mueller M."/>
            <person name="Kreis M."/>
            <person name="Delseny M."/>
            <person name="Puigdomenech P."/>
            <person name="Watson M."/>
            <person name="Schmidtheini T."/>
            <person name="Reichert B."/>
            <person name="Portetelle D."/>
            <person name="Perez-Alonso M."/>
            <person name="Boutry M."/>
            <person name="Bancroft I."/>
            <person name="Vos P."/>
            <person name="Hoheisel J."/>
            <person name="Zimmermann W."/>
            <person name="Wedler H."/>
            <person name="Ridley P."/>
            <person name="Langham S.-A."/>
            <person name="McCullagh B."/>
            <person name="Bilham L."/>
            <person name="Robben J."/>
            <person name="van der Schueren J."/>
            <person name="Grymonprez B."/>
            <person name="Chuang Y.-J."/>
            <person name="Vandenbussche F."/>
            <person name="Braeken M."/>
            <person name="Weltjens I."/>
            <person name="Voet M."/>
            <person name="Bastiaens I."/>
            <person name="Aert R."/>
            <person name="Defoor E."/>
            <person name="Weitzenegger T."/>
            <person name="Bothe G."/>
            <person name="Ramsperger U."/>
            <person name="Hilbert H."/>
            <person name="Braun M."/>
            <person name="Holzer E."/>
            <person name="Brandt A."/>
            <person name="Peters S."/>
            <person name="van Staveren M."/>
            <person name="Dirkse W."/>
            <person name="Mooijman P."/>
            <person name="Klein Lankhorst R."/>
            <person name="Rose M."/>
            <person name="Hauf J."/>
            <person name="Koetter P."/>
            <person name="Berneiser S."/>
            <person name="Hempel S."/>
            <person name="Feldpausch M."/>
            <person name="Lamberth S."/>
            <person name="Van den Daele H."/>
            <person name="De Keyser A."/>
            <person name="Buysshaert C."/>
            <person name="Gielen J."/>
            <person name="Villarroel R."/>
            <person name="De Clercq R."/>
            <person name="van Montagu M."/>
            <person name="Rogers J."/>
            <person name="Cronin A."/>
            <person name="Quail M.A."/>
            <person name="Bray-Allen S."/>
            <person name="Clark L."/>
            <person name="Doggett J."/>
            <person name="Hall S."/>
            <person name="Kay M."/>
            <person name="Lennard N."/>
            <person name="McLay K."/>
            <person name="Mayes R."/>
            <person name="Pettett A."/>
            <person name="Rajandream M.A."/>
            <person name="Lyne M."/>
            <person name="Benes V."/>
            <person name="Rechmann S."/>
            <person name="Borkova D."/>
            <person name="Bloecker H."/>
            <person name="Scharfe M."/>
            <person name="Grimm M."/>
            <person name="Loehnert T.-H."/>
            <person name="Dose S."/>
            <person name="de Haan M."/>
            <person name="Maarse A.C."/>
            <person name="Schaefer M."/>
            <person name="Mueller-Auer S."/>
            <person name="Gabel C."/>
            <person name="Fuchs M."/>
            <person name="Fartmann B."/>
            <person name="Granderath K."/>
            <person name="Dauner D."/>
            <person name="Herzl A."/>
            <person name="Neumann S."/>
            <person name="Argiriou A."/>
            <person name="Vitale D."/>
            <person name="Liguori R."/>
            <person name="Piravandi E."/>
            <person name="Massenet O."/>
            <person name="Quigley F."/>
            <person name="Clabauld G."/>
            <person name="Muendlein A."/>
            <person name="Felber R."/>
            <person name="Schnabl S."/>
            <person name="Hiller R."/>
            <person name="Schmidt W."/>
            <person name="Lecharny A."/>
            <person name="Aubourg S."/>
            <person name="Chefdor F."/>
            <person name="Cooke R."/>
            <person name="Berger C."/>
            <person name="Monfort A."/>
            <person name="Casacuberta E."/>
            <person name="Gibbons T."/>
            <person name="Weber N."/>
            <person name="Vandenbol M."/>
            <person name="Bargues M."/>
            <person name="Terol J."/>
            <person name="Torres A."/>
            <person name="Perez-Perez A."/>
            <person name="Purnelle B."/>
            <person name="Bent E."/>
            <person name="Johnson S."/>
            <person name="Tacon D."/>
            <person name="Jesse T."/>
            <person name="Heijnen L."/>
            <person name="Schwarz S."/>
            <person name="Scholler P."/>
            <person name="Heber S."/>
            <person name="Francs P."/>
            <person name="Bielke C."/>
            <person name="Frishman D."/>
            <person name="Haase D."/>
            <person name="Lemcke K."/>
            <person name="Mewes H.-W."/>
            <person name="Stocker S."/>
            <person name="Zaccaria P."/>
            <person name="Bevan M."/>
            <person name="Wilson R.K."/>
            <person name="de la Bastide M."/>
            <person name="Habermann K."/>
            <person name="Parnell L."/>
            <person name="Dedhia N."/>
            <person name="Gnoj L."/>
            <person name="Schutz K."/>
            <person name="Huang E."/>
            <person name="Spiegel L."/>
            <person name="Sekhon M."/>
            <person name="Murray J."/>
            <person name="Sheet P."/>
            <person name="Cordes M."/>
            <person name="Abu-Threideh J."/>
            <person name="Stoneking T."/>
            <person name="Kalicki J."/>
            <person name="Graves T."/>
            <person name="Harmon G."/>
            <person name="Edwards J."/>
            <person name="Latreille P."/>
            <person name="Courtney L."/>
            <person name="Cloud J."/>
            <person name="Abbott A."/>
            <person name="Scott K."/>
            <person name="Johnson D."/>
            <person name="Minx P."/>
            <person name="Bentley D."/>
            <person name="Fulton B."/>
            <person name="Miller N."/>
            <person name="Greco T."/>
            <person name="Kemp K."/>
            <person name="Kramer J."/>
            <person name="Fulton L."/>
            <person name="Mardis E."/>
            <person name="Dante M."/>
            <person name="Pepin K."/>
            <person name="Hillier L.W."/>
            <person name="Nelson J."/>
            <person name="Spieth J."/>
            <person name="Ryan E."/>
            <person name="Andrews S."/>
            <person name="Geisel C."/>
            <person name="Layman D."/>
            <person name="Du H."/>
            <person name="Ali J."/>
            <person name="Berghoff A."/>
            <person name="Jones K."/>
            <person name="Drone K."/>
            <person name="Cotton M."/>
            <person name="Joshu C."/>
            <person name="Antonoiu B."/>
            <person name="Zidanic M."/>
            <person name="Strong C."/>
            <person name="Sun H."/>
            <person name="Lamar B."/>
            <person name="Yordan C."/>
            <person name="Ma P."/>
            <person name="Zhong J."/>
            <person name="Preston R."/>
            <person name="Vil D."/>
            <person name="Shekher M."/>
            <person name="Matero A."/>
            <person name="Shah R."/>
            <person name="Swaby I.K."/>
            <person name="O'Shaughnessy A."/>
            <person name="Rodriguez M."/>
            <person name="Hoffman J."/>
            <person name="Till S."/>
            <person name="Granat S."/>
            <person name="Shohdy N."/>
            <person name="Hasegawa A."/>
            <person name="Hameed A."/>
            <person name="Lodhi M."/>
            <person name="Johnson A."/>
            <person name="Chen E."/>
            <person name="Marra M.A."/>
            <person name="Martienssen R."/>
            <person name="McCombie W.R."/>
        </authorList>
    </citation>
    <scope>NUCLEOTIDE SEQUENCE [LARGE SCALE GENOMIC DNA]</scope>
    <source>
        <strain>cv. Columbia</strain>
    </source>
</reference>
<reference key="2">
    <citation type="journal article" date="2017" name="Plant J.">
        <title>Araport11: a complete reannotation of the Arabidopsis thaliana reference genome.</title>
        <authorList>
            <person name="Cheng C.Y."/>
            <person name="Krishnakumar V."/>
            <person name="Chan A.P."/>
            <person name="Thibaud-Nissen F."/>
            <person name="Schobel S."/>
            <person name="Town C.D."/>
        </authorList>
    </citation>
    <scope>GENOME REANNOTATION</scope>
    <source>
        <strain>cv. Columbia</strain>
    </source>
</reference>
<reference key="3">
    <citation type="journal article" date="2006" name="Plant Biotechnol. J.">
        <title>Simultaneous high-throughput recombinational cloning of open reading frames in closed and open configurations.</title>
        <authorList>
            <person name="Underwood B.A."/>
            <person name="Vanderhaeghen R."/>
            <person name="Whitford R."/>
            <person name="Town C.D."/>
            <person name="Hilson P."/>
        </authorList>
    </citation>
    <scope>NUCLEOTIDE SEQUENCE [LARGE SCALE GENOMIC DNA]</scope>
    <source>
        <strain>cv. Columbia</strain>
    </source>
</reference>
<accession>Q1PE57</accession>
<accession>A0MF89</accession>
<accession>F4JLV1</accession>
<accession>Q9SUX6</accession>
<evidence type="ECO:0000305" key="1"/>
<name>FBK87_ARATH</name>
<dbReference type="EMBL" id="AL033545">
    <property type="protein sequence ID" value="CAB52817.1"/>
    <property type="status" value="ALT_SEQ"/>
    <property type="molecule type" value="Genomic_DNA"/>
</dbReference>
<dbReference type="EMBL" id="AL161557">
    <property type="protein sequence ID" value="CAB79198.1"/>
    <property type="status" value="ALT_SEQ"/>
    <property type="molecule type" value="Genomic_DNA"/>
</dbReference>
<dbReference type="EMBL" id="CP002687">
    <property type="protein sequence ID" value="AEE84607.2"/>
    <property type="molecule type" value="Genomic_DNA"/>
</dbReference>
<dbReference type="EMBL" id="DQ446861">
    <property type="protein sequence ID" value="ABE65532.1"/>
    <property type="molecule type" value="Genomic_DNA"/>
</dbReference>
<dbReference type="EMBL" id="DQ653215">
    <property type="protein sequence ID" value="ABK28256.1"/>
    <property type="status" value="ALT_SEQ"/>
    <property type="molecule type" value="Genomic_DNA"/>
</dbReference>
<dbReference type="PIR" id="H85256">
    <property type="entry name" value="H85256"/>
</dbReference>
<dbReference type="RefSeq" id="NP_193974.3">
    <property type="nucleotide sequence ID" value="NM_118369.3"/>
</dbReference>
<dbReference type="SMR" id="Q1PE57"/>
<dbReference type="FunCoup" id="Q1PE57">
    <property type="interactions" value="132"/>
</dbReference>
<dbReference type="STRING" id="3702.Q1PE57"/>
<dbReference type="PaxDb" id="3702-AT4G22430.1"/>
<dbReference type="EnsemblPlants" id="AT4G22430.1">
    <property type="protein sequence ID" value="AT4G22430.1"/>
    <property type="gene ID" value="AT4G22430"/>
</dbReference>
<dbReference type="GeneID" id="828338"/>
<dbReference type="Gramene" id="AT4G22430.1">
    <property type="protein sequence ID" value="AT4G22430.1"/>
    <property type="gene ID" value="AT4G22430"/>
</dbReference>
<dbReference type="KEGG" id="ath:AT4G22430"/>
<dbReference type="Araport" id="AT4G22430"/>
<dbReference type="TAIR" id="AT4G22430"/>
<dbReference type="HOGENOM" id="CLU_029240_1_0_1"/>
<dbReference type="InParanoid" id="Q1PE57"/>
<dbReference type="OMA" id="MYIKTLA"/>
<dbReference type="PhylomeDB" id="Q1PE57"/>
<dbReference type="PRO" id="PR:Q1PE57"/>
<dbReference type="Proteomes" id="UP000006548">
    <property type="component" value="Chromosome 4"/>
</dbReference>
<dbReference type="ExpressionAtlas" id="Q1PE57">
    <property type="expression patterns" value="baseline and differential"/>
</dbReference>
<dbReference type="InterPro" id="IPR055290">
    <property type="entry name" value="At3g26010-like"/>
</dbReference>
<dbReference type="InterPro" id="IPR056592">
    <property type="entry name" value="At3g26010-like_b-prop"/>
</dbReference>
<dbReference type="InterPro" id="IPR036047">
    <property type="entry name" value="F-box-like_dom_sf"/>
</dbReference>
<dbReference type="InterPro" id="IPR001810">
    <property type="entry name" value="F-box_dom"/>
</dbReference>
<dbReference type="PANTHER" id="PTHR35546:SF25">
    <property type="entry name" value="F-BOX DOMAIN-CONTAINING PROTEIN"/>
    <property type="match status" value="1"/>
</dbReference>
<dbReference type="PANTHER" id="PTHR35546">
    <property type="entry name" value="F-BOX PROTEIN INTERACTION DOMAIN PROTEIN-RELATED"/>
    <property type="match status" value="1"/>
</dbReference>
<dbReference type="Pfam" id="PF24750">
    <property type="entry name" value="b-prop_At3g26010-like"/>
    <property type="match status" value="1"/>
</dbReference>
<dbReference type="Pfam" id="PF00646">
    <property type="entry name" value="F-box"/>
    <property type="match status" value="1"/>
</dbReference>
<dbReference type="SUPFAM" id="SSF81383">
    <property type="entry name" value="F-box domain"/>
    <property type="match status" value="1"/>
</dbReference>
<proteinExistence type="predicted"/>
<gene>
    <name type="ordered locus">At4g22430</name>
    <name type="ORF">F7K2.10</name>
</gene>
<feature type="chain" id="PRO_0000283245" description="Putative F-box/kelch-repeat protein At4g22430">
    <location>
        <begin position="1"/>
        <end position="413"/>
    </location>
</feature>
<feature type="domain" description="F-box">
    <location>
        <begin position="5"/>
        <end position="54"/>
    </location>
</feature>
<feature type="repeat" description="Kelch">
    <location>
        <begin position="168"/>
        <end position="210"/>
    </location>
</feature>
<keyword id="KW-0880">Kelch repeat</keyword>
<keyword id="KW-1185">Reference proteome</keyword>
<protein>
    <recommendedName>
        <fullName>Putative F-box/kelch-repeat protein At4g22430</fullName>
    </recommendedName>
</protein>